<reference key="1">
    <citation type="journal article" date="1999" name="Mol. Gen. Genet.">
        <title>Isolation and characterization of a purC(orf)QLF operon from Lactococcus lactis MG1614.</title>
        <authorList>
            <person name="Peltonen T."/>
            <person name="Mantasala P."/>
        </authorList>
    </citation>
    <scope>NUCLEOTIDE SEQUENCE [GENOMIC DNA]</scope>
    <source>
        <strain>MG1614</strain>
    </source>
</reference>
<name>PURL_LACLC</name>
<comment type="function">
    <text evidence="1">Part of the phosphoribosylformylglycinamidine synthase complex involved in the purines biosynthetic pathway. Catalyzes the ATP-dependent conversion of formylglycinamide ribonucleotide (FGAR) and glutamine to yield formylglycinamidine ribonucleotide (FGAM) and glutamate. The FGAM synthase complex is composed of three subunits. PurQ produces an ammonia molecule by converting glutamine to glutamate. PurL transfers the ammonia molecule to FGAR to form FGAM in an ATP-dependent manner. PurS interacts with PurQ and PurL and is thought to assist in the transfer of the ammonia molecule from PurQ to PurL.</text>
</comment>
<comment type="catalytic activity">
    <reaction evidence="1">
        <text>N(2)-formyl-N(1)-(5-phospho-beta-D-ribosyl)glycinamide + L-glutamine + ATP + H2O = 2-formamido-N(1)-(5-O-phospho-beta-D-ribosyl)acetamidine + L-glutamate + ADP + phosphate + H(+)</text>
        <dbReference type="Rhea" id="RHEA:17129"/>
        <dbReference type="ChEBI" id="CHEBI:15377"/>
        <dbReference type="ChEBI" id="CHEBI:15378"/>
        <dbReference type="ChEBI" id="CHEBI:29985"/>
        <dbReference type="ChEBI" id="CHEBI:30616"/>
        <dbReference type="ChEBI" id="CHEBI:43474"/>
        <dbReference type="ChEBI" id="CHEBI:58359"/>
        <dbReference type="ChEBI" id="CHEBI:147286"/>
        <dbReference type="ChEBI" id="CHEBI:147287"/>
        <dbReference type="ChEBI" id="CHEBI:456216"/>
        <dbReference type="EC" id="6.3.5.3"/>
    </reaction>
</comment>
<comment type="pathway">
    <text evidence="1">Purine metabolism; IMP biosynthesis via de novo pathway; 5-amino-1-(5-phospho-D-ribosyl)imidazole from N(2)-formyl-N(1)-(5-phospho-D-ribosyl)glycinamide: step 1/2.</text>
</comment>
<comment type="subunit">
    <text evidence="1">Monomer. Part of the FGAM synthase complex composed of 1 PurL, 1 PurQ and 2 PurS subunits.</text>
</comment>
<comment type="subcellular location">
    <subcellularLocation>
        <location evidence="1">Cytoplasm</location>
    </subcellularLocation>
</comment>
<comment type="similarity">
    <text evidence="1">Belongs to the FGAMS family.</text>
</comment>
<proteinExistence type="inferred from homology"/>
<sequence length="739" mass="79636">MTLEMSPEQIQESKIYREWGLTDEEYLKIKDEILGGRLPNFTETGMYAVMWSEHCCYKNSKPVLKKFPTTGPQVLMGPGEGAGVVDIGDDLAVVFKAESHNHPSYVEPYEGAATGSGGIIRDIFSMGARPIAILDSLRFGPIDNGKTRHIVDQVTAGIAGYGNCIGIPTVGGEVAFDESYAGNPLVNVMCVGLIEHKHIQKGQAKGVGNSIFYVGAKTGRDGIHGASFASKEFGSGSETQRSAVQVGDPFMEKLLLEACIEVIQNHGDILVGIQDMGAAGLVSSTSEMASKAGSGLRLNLDNVPQRETEMIPYEMMLSESQERMVLCVKKGHEQEIIDLFKKYDLDAVNIGEVTDDGFYTLYHKGQMVAHVPVDSLAEDAPTYYREAKVPERIQKFTDSEKYLPEITDSAVSEIFKKLLAQPTIASKKSIYETYDSRVMTNTVVAPGSDAAVLRVRGTNKALAMTTDCNARYLYLDPEKGGAIAVAEAARNIVASGGKPLAITDCLNFGNPEKPEQFWELTTAADGISRSCLALDTPVISGNVSLYNETNGSAILPTPMIGMVGLIEDVKNITTQEFKKAGDLIVLVGQIFDDFSGSELQKMLTGEISGKIDFDLETEKVNQDFVLKAITDGLINSAHDLSEGGLAIALAESAFANGLGIDVEVDLSNAQLFSETQGRFVLSISPENQAAFEKLLTESSASSEVIGKVTDNGILKINELSISTDEAVSIYEGALPCLMK</sequence>
<organism>
    <name type="scientific">Lactococcus lactis subsp. cremoris</name>
    <name type="common">Streptococcus cremoris</name>
    <dbReference type="NCBI Taxonomy" id="1359"/>
    <lineage>
        <taxon>Bacteria</taxon>
        <taxon>Bacillati</taxon>
        <taxon>Bacillota</taxon>
        <taxon>Bacilli</taxon>
        <taxon>Lactobacillales</taxon>
        <taxon>Streptococcaceae</taxon>
        <taxon>Lactococcus</taxon>
    </lineage>
</organism>
<keyword id="KW-0067">ATP-binding</keyword>
<keyword id="KW-0963">Cytoplasm</keyword>
<keyword id="KW-0436">Ligase</keyword>
<keyword id="KW-0460">Magnesium</keyword>
<keyword id="KW-0479">Metal-binding</keyword>
<keyword id="KW-0547">Nucleotide-binding</keyword>
<keyword id="KW-0658">Purine biosynthesis</keyword>
<feature type="chain" id="PRO_0000100462" description="Phosphoribosylformylglycinamidine synthase subunit PurL">
    <location>
        <begin position="1"/>
        <end position="739"/>
    </location>
</feature>
<feature type="active site" evidence="1">
    <location>
        <position position="54"/>
    </location>
</feature>
<feature type="active site" description="Proton acceptor" evidence="1">
    <location>
        <position position="100"/>
    </location>
</feature>
<feature type="binding site" evidence="1">
    <location>
        <position position="57"/>
    </location>
    <ligand>
        <name>ATP</name>
        <dbReference type="ChEBI" id="CHEBI:30616"/>
    </ligand>
</feature>
<feature type="binding site" evidence="1">
    <location>
        <position position="96"/>
    </location>
    <ligand>
        <name>ATP</name>
        <dbReference type="ChEBI" id="CHEBI:30616"/>
    </ligand>
</feature>
<feature type="binding site" evidence="1">
    <location>
        <position position="98"/>
    </location>
    <ligand>
        <name>Mg(2+)</name>
        <dbReference type="ChEBI" id="CHEBI:18420"/>
        <label>1</label>
    </ligand>
</feature>
<feature type="binding site" evidence="1">
    <location>
        <begin position="99"/>
        <end position="102"/>
    </location>
    <ligand>
        <name>substrate</name>
    </ligand>
</feature>
<feature type="binding site" evidence="1">
    <location>
        <position position="121"/>
    </location>
    <ligand>
        <name>substrate</name>
    </ligand>
</feature>
<feature type="binding site" evidence="1">
    <location>
        <position position="122"/>
    </location>
    <ligand>
        <name>Mg(2+)</name>
        <dbReference type="ChEBI" id="CHEBI:18420"/>
        <label>2</label>
    </ligand>
</feature>
<feature type="binding site" evidence="1">
    <location>
        <position position="245"/>
    </location>
    <ligand>
        <name>substrate</name>
    </ligand>
</feature>
<feature type="binding site" evidence="1">
    <location>
        <position position="275"/>
    </location>
    <ligand>
        <name>Mg(2+)</name>
        <dbReference type="ChEBI" id="CHEBI:18420"/>
        <label>2</label>
    </ligand>
</feature>
<feature type="binding site" evidence="1">
    <location>
        <begin position="319"/>
        <end position="321"/>
    </location>
    <ligand>
        <name>substrate</name>
    </ligand>
</feature>
<feature type="binding site" evidence="1">
    <location>
        <position position="504"/>
    </location>
    <ligand>
        <name>ATP</name>
        <dbReference type="ChEBI" id="CHEBI:30616"/>
    </ligand>
</feature>
<feature type="binding site" evidence="1">
    <location>
        <position position="541"/>
    </location>
    <ligand>
        <name>ATP</name>
        <dbReference type="ChEBI" id="CHEBI:30616"/>
    </ligand>
</feature>
<feature type="binding site" evidence="1">
    <location>
        <position position="542"/>
    </location>
    <ligand>
        <name>Mg(2+)</name>
        <dbReference type="ChEBI" id="CHEBI:18420"/>
        <label>1</label>
    </ligand>
</feature>
<feature type="binding site" evidence="1">
    <location>
        <position position="544"/>
    </location>
    <ligand>
        <name>substrate</name>
    </ligand>
</feature>
<dbReference type="EC" id="6.3.5.3" evidence="1"/>
<dbReference type="EMBL" id="U64311">
    <property type="protein sequence ID" value="AAD12626.1"/>
    <property type="molecule type" value="Genomic_DNA"/>
</dbReference>
<dbReference type="PIR" id="T51701">
    <property type="entry name" value="T51701"/>
</dbReference>
<dbReference type="RefSeq" id="WP_011834914.1">
    <property type="nucleotide sequence ID" value="NZ_VERW01000005.1"/>
</dbReference>
<dbReference type="SMR" id="Q9ZB06"/>
<dbReference type="OMA" id="AIHPTPV"/>
<dbReference type="UniPathway" id="UPA00074">
    <property type="reaction ID" value="UER00128"/>
</dbReference>
<dbReference type="GO" id="GO:0005737">
    <property type="term" value="C:cytoplasm"/>
    <property type="evidence" value="ECO:0007669"/>
    <property type="project" value="UniProtKB-SubCell"/>
</dbReference>
<dbReference type="GO" id="GO:0005524">
    <property type="term" value="F:ATP binding"/>
    <property type="evidence" value="ECO:0007669"/>
    <property type="project" value="UniProtKB-UniRule"/>
</dbReference>
<dbReference type="GO" id="GO:0000287">
    <property type="term" value="F:magnesium ion binding"/>
    <property type="evidence" value="ECO:0007669"/>
    <property type="project" value="UniProtKB-UniRule"/>
</dbReference>
<dbReference type="GO" id="GO:0004642">
    <property type="term" value="F:phosphoribosylformylglycinamidine synthase activity"/>
    <property type="evidence" value="ECO:0007669"/>
    <property type="project" value="UniProtKB-UniRule"/>
</dbReference>
<dbReference type="GO" id="GO:0006189">
    <property type="term" value="P:'de novo' IMP biosynthetic process"/>
    <property type="evidence" value="ECO:0007669"/>
    <property type="project" value="UniProtKB-UniRule"/>
</dbReference>
<dbReference type="CDD" id="cd02203">
    <property type="entry name" value="PurL_repeat1"/>
    <property type="match status" value="1"/>
</dbReference>
<dbReference type="CDD" id="cd02204">
    <property type="entry name" value="PurL_repeat2"/>
    <property type="match status" value="1"/>
</dbReference>
<dbReference type="FunFam" id="3.30.1330.10:FF:000004">
    <property type="entry name" value="Phosphoribosylformylglycinamidine synthase subunit PurL"/>
    <property type="match status" value="1"/>
</dbReference>
<dbReference type="FunFam" id="3.90.650.10:FF:000009">
    <property type="entry name" value="Phosphoribosylformylglycinamidine synthase subunit PurL"/>
    <property type="match status" value="1"/>
</dbReference>
<dbReference type="Gene3D" id="3.90.650.10">
    <property type="entry name" value="PurM-like C-terminal domain"/>
    <property type="match status" value="2"/>
</dbReference>
<dbReference type="Gene3D" id="3.30.1330.10">
    <property type="entry name" value="PurM-like, N-terminal domain"/>
    <property type="match status" value="2"/>
</dbReference>
<dbReference type="HAMAP" id="MF_00420">
    <property type="entry name" value="PurL_2"/>
    <property type="match status" value="1"/>
</dbReference>
<dbReference type="InterPro" id="IPR010074">
    <property type="entry name" value="PRibForGlyAmidine_synth_PurL"/>
</dbReference>
<dbReference type="InterPro" id="IPR041609">
    <property type="entry name" value="PurL_linker"/>
</dbReference>
<dbReference type="InterPro" id="IPR010918">
    <property type="entry name" value="PurM-like_C_dom"/>
</dbReference>
<dbReference type="InterPro" id="IPR036676">
    <property type="entry name" value="PurM-like_C_sf"/>
</dbReference>
<dbReference type="InterPro" id="IPR016188">
    <property type="entry name" value="PurM-like_N"/>
</dbReference>
<dbReference type="InterPro" id="IPR036921">
    <property type="entry name" value="PurM-like_N_sf"/>
</dbReference>
<dbReference type="NCBIfam" id="TIGR01736">
    <property type="entry name" value="FGAM_synth_II"/>
    <property type="match status" value="1"/>
</dbReference>
<dbReference type="NCBIfam" id="NF002290">
    <property type="entry name" value="PRK01213.1"/>
    <property type="match status" value="1"/>
</dbReference>
<dbReference type="PANTHER" id="PTHR43555">
    <property type="entry name" value="PHOSPHORIBOSYLFORMYLGLYCINAMIDINE SYNTHASE SUBUNIT PURL"/>
    <property type="match status" value="1"/>
</dbReference>
<dbReference type="PANTHER" id="PTHR43555:SF1">
    <property type="entry name" value="PHOSPHORIBOSYLFORMYLGLYCINAMIDINE SYNTHASE SUBUNIT PURL"/>
    <property type="match status" value="1"/>
</dbReference>
<dbReference type="Pfam" id="PF00586">
    <property type="entry name" value="AIRS"/>
    <property type="match status" value="2"/>
</dbReference>
<dbReference type="Pfam" id="PF02769">
    <property type="entry name" value="AIRS_C"/>
    <property type="match status" value="2"/>
</dbReference>
<dbReference type="Pfam" id="PF18072">
    <property type="entry name" value="FGAR-AT_linker"/>
    <property type="match status" value="1"/>
</dbReference>
<dbReference type="PIRSF" id="PIRSF001587">
    <property type="entry name" value="FGAM_synthase_II"/>
    <property type="match status" value="1"/>
</dbReference>
<dbReference type="SUPFAM" id="SSF56042">
    <property type="entry name" value="PurM C-terminal domain-like"/>
    <property type="match status" value="2"/>
</dbReference>
<dbReference type="SUPFAM" id="SSF55326">
    <property type="entry name" value="PurM N-terminal domain-like"/>
    <property type="match status" value="2"/>
</dbReference>
<accession>Q9ZB06</accession>
<gene>
    <name evidence="1" type="primary">purL</name>
</gene>
<evidence type="ECO:0000255" key="1">
    <source>
        <dbReference type="HAMAP-Rule" id="MF_00420"/>
    </source>
</evidence>
<protein>
    <recommendedName>
        <fullName evidence="1">Phosphoribosylformylglycinamidine synthase subunit PurL</fullName>
        <shortName evidence="1">FGAM synthase</shortName>
        <ecNumber evidence="1">6.3.5.3</ecNumber>
    </recommendedName>
    <alternativeName>
        <fullName evidence="1">Formylglycinamide ribonucleotide amidotransferase subunit II</fullName>
        <shortName evidence="1">FGAR amidotransferase II</shortName>
        <shortName evidence="1">FGAR-AT II</shortName>
    </alternativeName>
    <alternativeName>
        <fullName evidence="1">Glutamine amidotransferase PurL</fullName>
    </alternativeName>
    <alternativeName>
        <fullName evidence="1">Phosphoribosylformylglycinamidine synthase subunit II</fullName>
    </alternativeName>
</protein>